<evidence type="ECO:0000250" key="1">
    <source>
        <dbReference type="UniProtKB" id="Q92564"/>
    </source>
</evidence>
<evidence type="ECO:0000255" key="2">
    <source>
        <dbReference type="PROSITE-ProRule" id="PRU00574"/>
    </source>
</evidence>
<evidence type="ECO:0000256" key="3">
    <source>
        <dbReference type="SAM" id="MobiDB-lite"/>
    </source>
</evidence>
<evidence type="ECO:0000269" key="4">
    <source>
    </source>
</evidence>
<evidence type="ECO:0000303" key="5">
    <source>
    </source>
</evidence>
<evidence type="ECO:0000305" key="6"/>
<evidence type="ECO:0000312" key="7">
    <source>
        <dbReference type="EMBL" id="AAS93741.1"/>
    </source>
</evidence>
<evidence type="ECO:0000312" key="8">
    <source>
        <dbReference type="FlyBase" id="FBgn0036967"/>
    </source>
</evidence>
<evidence type="ECO:0000312" key="9">
    <source>
        <dbReference type="Proteomes" id="UP000000803"/>
    </source>
</evidence>
<proteinExistence type="evidence at transcript level"/>
<protein>
    <recommendedName>
        <fullName evidence="6">DCN1-like protein 4</fullName>
        <shortName evidence="1">DCNL4</shortName>
    </recommendedName>
    <alternativeName>
        <fullName evidence="5">DCUN1 domain-containing protein 4</fullName>
    </alternativeName>
    <alternativeName>
        <fullName evidence="5">Defective in cullin neddylation protein 1-like protein 4</fullName>
    </alternativeName>
    <alternativeName>
        <fullName evidence="5">Squamous cell carcinoma-related oncogene 4</fullName>
    </alternativeName>
</protein>
<feature type="chain" id="PRO_0000459586" description="DCN1-like protein 4">
    <location>
        <begin position="1"/>
        <end position="248"/>
    </location>
</feature>
<feature type="domain" description="DCUN1" evidence="2">
    <location>
        <begin position="47"/>
        <end position="235"/>
    </location>
</feature>
<feature type="region of interest" description="Disordered" evidence="3">
    <location>
        <begin position="1"/>
        <end position="35"/>
    </location>
</feature>
<feature type="compositionally biased region" description="Polar residues" evidence="3">
    <location>
        <begin position="26"/>
        <end position="35"/>
    </location>
</feature>
<gene>
    <name evidence="5 8" type="primary">SCCRO4</name>
    <name evidence="6" type="synonym">Dcun1d4</name>
    <name evidence="8" type="ORF">CG6597</name>
</gene>
<sequence>MPRGKRRAADTISDNMDHGQPKRARTSYTSIPTQQSSRRHIRLEDGFSQKRCMAWFQEYTTPDEPETLGPDGMEKFCEDIGVEPENIVMLVLAYKMGATQMGFFSQQEWLKGLTELDCDSAAKMVVKLDYLRSILNDPNSFKSIYRYAYDFAKDSDQRCMDILTAKAMLQLLLGKHWPLYPQFAQFLEQSKYKAINKDQWCNILEFSRTISIDLSNYDIDGAWPVMLDEFVEWLRLQRSQVTSTTGSS</sequence>
<organism evidence="9">
    <name type="scientific">Drosophila melanogaster</name>
    <name type="common">Fruit fly</name>
    <dbReference type="NCBI Taxonomy" id="7227"/>
    <lineage>
        <taxon>Eukaryota</taxon>
        <taxon>Metazoa</taxon>
        <taxon>Ecdysozoa</taxon>
        <taxon>Arthropoda</taxon>
        <taxon>Hexapoda</taxon>
        <taxon>Insecta</taxon>
        <taxon>Pterygota</taxon>
        <taxon>Neoptera</taxon>
        <taxon>Endopterygota</taxon>
        <taxon>Diptera</taxon>
        <taxon>Brachycera</taxon>
        <taxon>Muscomorpha</taxon>
        <taxon>Ephydroidea</taxon>
        <taxon>Drosophilidae</taxon>
        <taxon>Drosophila</taxon>
        <taxon>Sophophora</taxon>
    </lineage>
</organism>
<dbReference type="EMBL" id="AE014296">
    <property type="protein sequence ID" value="AAF49037.2"/>
    <property type="molecule type" value="Genomic_DNA"/>
</dbReference>
<dbReference type="EMBL" id="AE014296">
    <property type="protein sequence ID" value="AAN11626.2"/>
    <property type="molecule type" value="Genomic_DNA"/>
</dbReference>
<dbReference type="EMBL" id="AE014296">
    <property type="protein sequence ID" value="AHN58152.1"/>
    <property type="molecule type" value="Genomic_DNA"/>
</dbReference>
<dbReference type="EMBL" id="BT012470">
    <property type="protein sequence ID" value="AAS93741.1"/>
    <property type="molecule type" value="mRNA"/>
</dbReference>
<dbReference type="RefSeq" id="NP_001287127.1">
    <property type="nucleotide sequence ID" value="NM_001300198.1"/>
</dbReference>
<dbReference type="RefSeq" id="NP_649204.2">
    <property type="nucleotide sequence ID" value="NM_140947.4"/>
</dbReference>
<dbReference type="RefSeq" id="NP_730510.2">
    <property type="nucleotide sequence ID" value="NM_168842.2"/>
</dbReference>
<dbReference type="SMR" id="Q9VWB1"/>
<dbReference type="FunCoup" id="Q9VWB1">
    <property type="interactions" value="1204"/>
</dbReference>
<dbReference type="STRING" id="7227.FBpp0074607"/>
<dbReference type="PaxDb" id="7227-FBpp0074607"/>
<dbReference type="DNASU" id="40231"/>
<dbReference type="EnsemblMetazoa" id="FBtr0074837">
    <property type="protein sequence ID" value="FBpp0074606"/>
    <property type="gene ID" value="FBgn0036967"/>
</dbReference>
<dbReference type="EnsemblMetazoa" id="FBtr0074838">
    <property type="protein sequence ID" value="FBpp0074607"/>
    <property type="gene ID" value="FBgn0036967"/>
</dbReference>
<dbReference type="EnsemblMetazoa" id="FBtr0344228">
    <property type="protein sequence ID" value="FBpp0310634"/>
    <property type="gene ID" value="FBgn0036967"/>
</dbReference>
<dbReference type="GeneID" id="40231"/>
<dbReference type="KEGG" id="dme:Dmel_CG6597"/>
<dbReference type="UCSC" id="CG6597-RA">
    <property type="organism name" value="d. melanogaster"/>
</dbReference>
<dbReference type="AGR" id="FB:FBgn0036967"/>
<dbReference type="CTD" id="40231"/>
<dbReference type="FlyBase" id="FBgn0036967">
    <property type="gene designation" value="SCCRO4"/>
</dbReference>
<dbReference type="VEuPathDB" id="VectorBase:FBgn0036967"/>
<dbReference type="eggNOG" id="KOG3077">
    <property type="taxonomic scope" value="Eukaryota"/>
</dbReference>
<dbReference type="GeneTree" id="ENSGT00940000171180"/>
<dbReference type="InParanoid" id="Q9VWB1"/>
<dbReference type="OMA" id="CIAWFRE"/>
<dbReference type="OrthoDB" id="286637at2759"/>
<dbReference type="Reactome" id="R-DME-8951664">
    <property type="pathway name" value="Neddylation"/>
</dbReference>
<dbReference type="BioGRID-ORCS" id="40231">
    <property type="hits" value="0 hits in 3 CRISPR screens"/>
</dbReference>
<dbReference type="ChiTaRS" id="CG6597">
    <property type="organism name" value="fly"/>
</dbReference>
<dbReference type="GenomeRNAi" id="40231"/>
<dbReference type="PRO" id="PR:Q9VWB1"/>
<dbReference type="Proteomes" id="UP000000803">
    <property type="component" value="Chromosome 3L"/>
</dbReference>
<dbReference type="Bgee" id="FBgn0036967">
    <property type="expression patterns" value="Expressed in imaginal disc and 126 other cell types or tissues"/>
</dbReference>
<dbReference type="ExpressionAtlas" id="Q9VWB1">
    <property type="expression patterns" value="baseline and differential"/>
</dbReference>
<dbReference type="GO" id="GO:0005634">
    <property type="term" value="C:nucleus"/>
    <property type="evidence" value="ECO:0000314"/>
    <property type="project" value="FlyBase"/>
</dbReference>
<dbReference type="GO" id="GO:0000151">
    <property type="term" value="C:ubiquitin ligase complex"/>
    <property type="evidence" value="ECO:0000318"/>
    <property type="project" value="GO_Central"/>
</dbReference>
<dbReference type="GO" id="GO:0097602">
    <property type="term" value="F:cullin family protein binding"/>
    <property type="evidence" value="ECO:0000318"/>
    <property type="project" value="GO_Central"/>
</dbReference>
<dbReference type="GO" id="GO:0031624">
    <property type="term" value="F:ubiquitin conjugating enzyme binding"/>
    <property type="evidence" value="ECO:0000318"/>
    <property type="project" value="GO_Central"/>
</dbReference>
<dbReference type="GO" id="GO:0032182">
    <property type="term" value="F:ubiquitin-like protein binding"/>
    <property type="evidence" value="ECO:0000318"/>
    <property type="project" value="GO_Central"/>
</dbReference>
<dbReference type="GO" id="GO:2000435">
    <property type="term" value="P:negative regulation of protein neddylation"/>
    <property type="evidence" value="ECO:0000315"/>
    <property type="project" value="FlyBase"/>
</dbReference>
<dbReference type="GO" id="GO:0045116">
    <property type="term" value="P:protein neddylation"/>
    <property type="evidence" value="ECO:0000318"/>
    <property type="project" value="GO_Central"/>
</dbReference>
<dbReference type="FunFam" id="1.10.238.10:FF:000041">
    <property type="entry name" value="DCN1-like protein"/>
    <property type="match status" value="1"/>
</dbReference>
<dbReference type="FunFam" id="1.10.238.200:FF:000002">
    <property type="entry name" value="DCN1-like protein"/>
    <property type="match status" value="1"/>
</dbReference>
<dbReference type="Gene3D" id="1.10.238.200">
    <property type="entry name" value="Cullin, PONY binding domain"/>
    <property type="match status" value="1"/>
</dbReference>
<dbReference type="Gene3D" id="1.10.238.10">
    <property type="entry name" value="EF-hand"/>
    <property type="match status" value="1"/>
</dbReference>
<dbReference type="InterPro" id="IPR014764">
    <property type="entry name" value="DCN-prot"/>
</dbReference>
<dbReference type="InterPro" id="IPR042460">
    <property type="entry name" value="DCN1-like_PONY"/>
</dbReference>
<dbReference type="InterPro" id="IPR005176">
    <property type="entry name" value="PONY_dom"/>
</dbReference>
<dbReference type="PANTHER" id="PTHR12281:SF12">
    <property type="entry name" value="DEFECTIVE IN CULLIN NEDDYLATION PROTEIN"/>
    <property type="match status" value="1"/>
</dbReference>
<dbReference type="PANTHER" id="PTHR12281">
    <property type="entry name" value="RP42 RELATED"/>
    <property type="match status" value="1"/>
</dbReference>
<dbReference type="Pfam" id="PF03556">
    <property type="entry name" value="Cullin_binding"/>
    <property type="match status" value="1"/>
</dbReference>
<dbReference type="PROSITE" id="PS51229">
    <property type="entry name" value="DCUN1"/>
    <property type="match status" value="1"/>
</dbReference>
<name>DCNL4_DROME</name>
<keyword id="KW-0539">Nucleus</keyword>
<keyword id="KW-1185">Reference proteome</keyword>
<keyword id="KW-0833">Ubl conjugation pathway</keyword>
<comment type="function">
    <text evidence="4">Inhibits neddylation of cullin components of SCF-type E3 ubiquitin ligase complexes and thus regulates SCF-type complex activity (PubMed:26792857). Essential for development (PubMed:26792857). Function inhibits cell proliferation and cell growth (PubMed:26792857).</text>
</comment>
<comment type="subcellular location">
    <subcellularLocation>
        <location evidence="4">Nucleus</location>
    </subcellularLocation>
    <text evidence="4">Exclusive nuclear localization in eye imaginal disk cells.</text>
</comment>
<accession>Q9VWB1</accession>
<reference evidence="9" key="1">
    <citation type="journal article" date="2000" name="Science">
        <title>The genome sequence of Drosophila melanogaster.</title>
        <authorList>
            <person name="Adams M.D."/>
            <person name="Celniker S.E."/>
            <person name="Holt R.A."/>
            <person name="Evans C.A."/>
            <person name="Gocayne J.D."/>
            <person name="Amanatides P.G."/>
            <person name="Scherer S.E."/>
            <person name="Li P.W."/>
            <person name="Hoskins R.A."/>
            <person name="Galle R.F."/>
            <person name="George R.A."/>
            <person name="Lewis S.E."/>
            <person name="Richards S."/>
            <person name="Ashburner M."/>
            <person name="Henderson S.N."/>
            <person name="Sutton G.G."/>
            <person name="Wortman J.R."/>
            <person name="Yandell M.D."/>
            <person name="Zhang Q."/>
            <person name="Chen L.X."/>
            <person name="Brandon R.C."/>
            <person name="Rogers Y.-H.C."/>
            <person name="Blazej R.G."/>
            <person name="Champe M."/>
            <person name="Pfeiffer B.D."/>
            <person name="Wan K.H."/>
            <person name="Doyle C."/>
            <person name="Baxter E.G."/>
            <person name="Helt G."/>
            <person name="Nelson C.R."/>
            <person name="Miklos G.L.G."/>
            <person name="Abril J.F."/>
            <person name="Agbayani A."/>
            <person name="An H.-J."/>
            <person name="Andrews-Pfannkoch C."/>
            <person name="Baldwin D."/>
            <person name="Ballew R.M."/>
            <person name="Basu A."/>
            <person name="Baxendale J."/>
            <person name="Bayraktaroglu L."/>
            <person name="Beasley E.M."/>
            <person name="Beeson K.Y."/>
            <person name="Benos P.V."/>
            <person name="Berman B.P."/>
            <person name="Bhandari D."/>
            <person name="Bolshakov S."/>
            <person name="Borkova D."/>
            <person name="Botchan M.R."/>
            <person name="Bouck J."/>
            <person name="Brokstein P."/>
            <person name="Brottier P."/>
            <person name="Burtis K.C."/>
            <person name="Busam D.A."/>
            <person name="Butler H."/>
            <person name="Cadieu E."/>
            <person name="Center A."/>
            <person name="Chandra I."/>
            <person name="Cherry J.M."/>
            <person name="Cawley S."/>
            <person name="Dahlke C."/>
            <person name="Davenport L.B."/>
            <person name="Davies P."/>
            <person name="de Pablos B."/>
            <person name="Delcher A."/>
            <person name="Deng Z."/>
            <person name="Mays A.D."/>
            <person name="Dew I."/>
            <person name="Dietz S.M."/>
            <person name="Dodson K."/>
            <person name="Doup L.E."/>
            <person name="Downes M."/>
            <person name="Dugan-Rocha S."/>
            <person name="Dunkov B.C."/>
            <person name="Dunn P."/>
            <person name="Durbin K.J."/>
            <person name="Evangelista C.C."/>
            <person name="Ferraz C."/>
            <person name="Ferriera S."/>
            <person name="Fleischmann W."/>
            <person name="Fosler C."/>
            <person name="Gabrielian A.E."/>
            <person name="Garg N.S."/>
            <person name="Gelbart W.M."/>
            <person name="Glasser K."/>
            <person name="Glodek A."/>
            <person name="Gong F."/>
            <person name="Gorrell J.H."/>
            <person name="Gu Z."/>
            <person name="Guan P."/>
            <person name="Harris M."/>
            <person name="Harris N.L."/>
            <person name="Harvey D.A."/>
            <person name="Heiman T.J."/>
            <person name="Hernandez J.R."/>
            <person name="Houck J."/>
            <person name="Hostin D."/>
            <person name="Houston K.A."/>
            <person name="Howland T.J."/>
            <person name="Wei M.-H."/>
            <person name="Ibegwam C."/>
            <person name="Jalali M."/>
            <person name="Kalush F."/>
            <person name="Karpen G.H."/>
            <person name="Ke Z."/>
            <person name="Kennison J.A."/>
            <person name="Ketchum K.A."/>
            <person name="Kimmel B.E."/>
            <person name="Kodira C.D."/>
            <person name="Kraft C.L."/>
            <person name="Kravitz S."/>
            <person name="Kulp D."/>
            <person name="Lai Z."/>
            <person name="Lasko P."/>
            <person name="Lei Y."/>
            <person name="Levitsky A.A."/>
            <person name="Li J.H."/>
            <person name="Li Z."/>
            <person name="Liang Y."/>
            <person name="Lin X."/>
            <person name="Liu X."/>
            <person name="Mattei B."/>
            <person name="McIntosh T.C."/>
            <person name="McLeod M.P."/>
            <person name="McPherson D."/>
            <person name="Merkulov G."/>
            <person name="Milshina N.V."/>
            <person name="Mobarry C."/>
            <person name="Morris J."/>
            <person name="Moshrefi A."/>
            <person name="Mount S.M."/>
            <person name="Moy M."/>
            <person name="Murphy B."/>
            <person name="Murphy L."/>
            <person name="Muzny D.M."/>
            <person name="Nelson D.L."/>
            <person name="Nelson D.R."/>
            <person name="Nelson K.A."/>
            <person name="Nixon K."/>
            <person name="Nusskern D.R."/>
            <person name="Pacleb J.M."/>
            <person name="Palazzolo M."/>
            <person name="Pittman G.S."/>
            <person name="Pan S."/>
            <person name="Pollard J."/>
            <person name="Puri V."/>
            <person name="Reese M.G."/>
            <person name="Reinert K."/>
            <person name="Remington K."/>
            <person name="Saunders R.D.C."/>
            <person name="Scheeler F."/>
            <person name="Shen H."/>
            <person name="Shue B.C."/>
            <person name="Siden-Kiamos I."/>
            <person name="Simpson M."/>
            <person name="Skupski M.P."/>
            <person name="Smith T.J."/>
            <person name="Spier E."/>
            <person name="Spradling A.C."/>
            <person name="Stapleton M."/>
            <person name="Strong R."/>
            <person name="Sun E."/>
            <person name="Svirskas R."/>
            <person name="Tector C."/>
            <person name="Turner R."/>
            <person name="Venter E."/>
            <person name="Wang A.H."/>
            <person name="Wang X."/>
            <person name="Wang Z.-Y."/>
            <person name="Wassarman D.A."/>
            <person name="Weinstock G.M."/>
            <person name="Weissenbach J."/>
            <person name="Williams S.M."/>
            <person name="Woodage T."/>
            <person name="Worley K.C."/>
            <person name="Wu D."/>
            <person name="Yang S."/>
            <person name="Yao Q.A."/>
            <person name="Ye J."/>
            <person name="Yeh R.-F."/>
            <person name="Zaveri J.S."/>
            <person name="Zhan M."/>
            <person name="Zhang G."/>
            <person name="Zhao Q."/>
            <person name="Zheng L."/>
            <person name="Zheng X.H."/>
            <person name="Zhong F.N."/>
            <person name="Zhong W."/>
            <person name="Zhou X."/>
            <person name="Zhu S.C."/>
            <person name="Zhu X."/>
            <person name="Smith H.O."/>
            <person name="Gibbs R.A."/>
            <person name="Myers E.W."/>
            <person name="Rubin G.M."/>
            <person name="Venter J.C."/>
        </authorList>
    </citation>
    <scope>NUCLEOTIDE SEQUENCE [LARGE SCALE GENOMIC DNA]</scope>
    <source>
        <strain>Berkeley</strain>
    </source>
</reference>
<reference evidence="9" key="2">
    <citation type="journal article" date="2002" name="Genome Biol.">
        <title>Finishing a whole-genome shotgun: release 3 of the Drosophila melanogaster euchromatic genome sequence.</title>
        <authorList>
            <person name="Celniker S.E."/>
            <person name="Wheeler D.A."/>
            <person name="Kronmiller B."/>
            <person name="Carlson J.W."/>
            <person name="Halpern A."/>
            <person name="Patel S."/>
            <person name="Adams M."/>
            <person name="Champe M."/>
            <person name="Dugan S.P."/>
            <person name="Frise E."/>
            <person name="Hodgson A."/>
            <person name="George R.A."/>
            <person name="Hoskins R.A."/>
            <person name="Laverty T."/>
            <person name="Muzny D.M."/>
            <person name="Nelson C.R."/>
            <person name="Pacleb J.M."/>
            <person name="Park S."/>
            <person name="Pfeiffer B.D."/>
            <person name="Richards S."/>
            <person name="Sodergren E.J."/>
            <person name="Svirskas R."/>
            <person name="Tabor P.E."/>
            <person name="Wan K."/>
            <person name="Stapleton M."/>
            <person name="Sutton G.G."/>
            <person name="Venter C."/>
            <person name="Weinstock G."/>
            <person name="Scherer S.E."/>
            <person name="Myers E.W."/>
            <person name="Gibbs R.A."/>
            <person name="Rubin G.M."/>
        </authorList>
    </citation>
    <scope>NUCLEOTIDE SEQUENCE [LARGE SCALE GENOMIC DNA]</scope>
    <source>
        <strain evidence="9">Berkeley</strain>
    </source>
</reference>
<reference evidence="7" key="3">
    <citation type="submission" date="2004-04" db="EMBL/GenBank/DDBJ databases">
        <authorList>
            <person name="Stapleton M."/>
            <person name="Carlson J."/>
            <person name="Chavez C."/>
            <person name="Frise E."/>
            <person name="George R."/>
            <person name="Pacleb J."/>
            <person name="Park S."/>
            <person name="Wan K."/>
            <person name="Yu C."/>
            <person name="Rubin G.M."/>
            <person name="Celniker S."/>
        </authorList>
    </citation>
    <scope>NUCLEOTIDE SEQUENCE [LARGE SCALE MRNA]</scope>
    <source>
        <strain evidence="7">Berkeley</strain>
        <tissue evidence="7">Embryo</tissue>
    </source>
</reference>
<reference evidence="6" key="4">
    <citation type="journal article" date="2016" name="J. Biol. Chem.">
        <title>Squamous Cell Carcinoma-related Oncogene (SCCRO) Family Members Regulate Cell Growth and Proliferation through Their Cooperative and Antagonistic Effects on Cullin Neddylation.</title>
        <authorList>
            <person name="Fu W."/>
            <person name="Sun J."/>
            <person name="Huang G."/>
            <person name="Liu J.C."/>
            <person name="Kaufman A."/>
            <person name="Ryan R.J."/>
            <person name="Ramanathan S.Y."/>
            <person name="Venkatesh T."/>
            <person name="Singh B."/>
        </authorList>
    </citation>
    <scope>FUNCTION</scope>
    <scope>SUBCELLULAR LOCATION</scope>
</reference>